<proteinExistence type="inferred from homology"/>
<evidence type="ECO:0000255" key="1">
    <source>
        <dbReference type="HAMAP-Rule" id="MF_01857"/>
    </source>
</evidence>
<organism>
    <name type="scientific">Aeromonas salmonicida (strain A449)</name>
    <dbReference type="NCBI Taxonomy" id="382245"/>
    <lineage>
        <taxon>Bacteria</taxon>
        <taxon>Pseudomonadati</taxon>
        <taxon>Pseudomonadota</taxon>
        <taxon>Gammaproteobacteria</taxon>
        <taxon>Aeromonadales</taxon>
        <taxon>Aeromonadaceae</taxon>
        <taxon>Aeromonas</taxon>
    </lineage>
</organism>
<accession>A4SML8</accession>
<feature type="chain" id="PRO_0000366215" description="Ribosomal RNA large subunit methyltransferase I">
    <location>
        <begin position="1"/>
        <end position="396"/>
    </location>
</feature>
<feature type="domain" description="PUA" evidence="1">
    <location>
        <begin position="2"/>
        <end position="79"/>
    </location>
</feature>
<keyword id="KW-0963">Cytoplasm</keyword>
<keyword id="KW-0489">Methyltransferase</keyword>
<keyword id="KW-0694">RNA-binding</keyword>
<keyword id="KW-0698">rRNA processing</keyword>
<keyword id="KW-0949">S-adenosyl-L-methionine</keyword>
<keyword id="KW-0808">Transferase</keyword>
<sequence length="396" mass="44382">MSVFIYLVKGREKSLLRRHPWIFSKGIERVEGNPVDGDTVEIYANDGRWLARGAWSGSSQIRARVWTFDKEETVDLDFFLRRLKYAQESRDPLIKRQGLTGYRLCAAESDGLPGLTIDSYADFLVCQILSAGAEFQRELITQALRTLYPECSIYERSDVAVRKKEGLKERTGVIHGETPTEPVVIEENGVKILVDIRNGHKTGFYLDQRDNRQAVSKYTSAKRVLNCFSYTGGFGIYALKGGAKEVVNVDLSQTALDMARQNAELNGLDISNTQFIRHDVFKLLREYREKGEKFDVIVLDPPKFAESKAQLLGACRGYKDINMLAFQLLAPGGVLLTYSCSGLMEQSLFQKIVADAALDAGRDAQILELLSQASDHPIGTAYPEGFYLKGLVVRAR</sequence>
<dbReference type="EC" id="2.1.1.191" evidence="1"/>
<dbReference type="EMBL" id="CP000644">
    <property type="protein sequence ID" value="ABO90140.1"/>
    <property type="molecule type" value="Genomic_DNA"/>
</dbReference>
<dbReference type="RefSeq" id="WP_005311453.1">
    <property type="nucleotide sequence ID" value="NC_009348.1"/>
</dbReference>
<dbReference type="SMR" id="A4SML8"/>
<dbReference type="STRING" id="29491.GCA_000820065_00684"/>
<dbReference type="KEGG" id="asa:ASA_2074"/>
<dbReference type="PATRIC" id="fig|382245.13.peg.2039"/>
<dbReference type="eggNOG" id="COG1092">
    <property type="taxonomic scope" value="Bacteria"/>
</dbReference>
<dbReference type="HOGENOM" id="CLU_014042_0_0_6"/>
<dbReference type="Proteomes" id="UP000000225">
    <property type="component" value="Chromosome"/>
</dbReference>
<dbReference type="GO" id="GO:0005737">
    <property type="term" value="C:cytoplasm"/>
    <property type="evidence" value="ECO:0007669"/>
    <property type="project" value="UniProtKB-SubCell"/>
</dbReference>
<dbReference type="GO" id="GO:0003723">
    <property type="term" value="F:RNA binding"/>
    <property type="evidence" value="ECO:0007669"/>
    <property type="project" value="UniProtKB-KW"/>
</dbReference>
<dbReference type="GO" id="GO:0016434">
    <property type="term" value="F:rRNA (cytosine) methyltransferase activity"/>
    <property type="evidence" value="ECO:0007669"/>
    <property type="project" value="UniProtKB-UniRule"/>
</dbReference>
<dbReference type="CDD" id="cd02440">
    <property type="entry name" value="AdoMet_MTases"/>
    <property type="match status" value="1"/>
</dbReference>
<dbReference type="CDD" id="cd21153">
    <property type="entry name" value="PUA_RlmI"/>
    <property type="match status" value="1"/>
</dbReference>
<dbReference type="CDD" id="cd11572">
    <property type="entry name" value="RlmI_M_like"/>
    <property type="match status" value="1"/>
</dbReference>
<dbReference type="Gene3D" id="2.30.130.10">
    <property type="entry name" value="PUA domain"/>
    <property type="match status" value="1"/>
</dbReference>
<dbReference type="Gene3D" id="3.30.750.80">
    <property type="entry name" value="RNA methyltransferase domain (HRMD) like"/>
    <property type="match status" value="1"/>
</dbReference>
<dbReference type="Gene3D" id="3.40.50.150">
    <property type="entry name" value="Vaccinia Virus protein VP39"/>
    <property type="match status" value="1"/>
</dbReference>
<dbReference type="HAMAP" id="MF_01857">
    <property type="entry name" value="23SrRNA_methyltr_I"/>
    <property type="match status" value="1"/>
</dbReference>
<dbReference type="InterPro" id="IPR002478">
    <property type="entry name" value="PUA"/>
</dbReference>
<dbReference type="InterPro" id="IPR015947">
    <property type="entry name" value="PUA-like_sf"/>
</dbReference>
<dbReference type="InterPro" id="IPR036974">
    <property type="entry name" value="PUA_sf"/>
</dbReference>
<dbReference type="InterPro" id="IPR023542">
    <property type="entry name" value="RLMI"/>
</dbReference>
<dbReference type="InterPro" id="IPR041532">
    <property type="entry name" value="RlmI-like_PUA"/>
</dbReference>
<dbReference type="InterPro" id="IPR019614">
    <property type="entry name" value="SAM-dep_methyl-trfase"/>
</dbReference>
<dbReference type="InterPro" id="IPR029063">
    <property type="entry name" value="SAM-dependent_MTases_sf"/>
</dbReference>
<dbReference type="PANTHER" id="PTHR42873">
    <property type="entry name" value="RIBOSOMAL RNA LARGE SUBUNIT METHYLTRANSFERASE"/>
    <property type="match status" value="1"/>
</dbReference>
<dbReference type="PANTHER" id="PTHR42873:SF1">
    <property type="entry name" value="S-ADENOSYLMETHIONINE-DEPENDENT METHYLTRANSFERASE DOMAIN-CONTAINING PROTEIN"/>
    <property type="match status" value="1"/>
</dbReference>
<dbReference type="Pfam" id="PF10672">
    <property type="entry name" value="Methyltrans_SAM"/>
    <property type="match status" value="1"/>
</dbReference>
<dbReference type="Pfam" id="PF17785">
    <property type="entry name" value="PUA_3"/>
    <property type="match status" value="1"/>
</dbReference>
<dbReference type="SMART" id="SM00359">
    <property type="entry name" value="PUA"/>
    <property type="match status" value="1"/>
</dbReference>
<dbReference type="SUPFAM" id="SSF88697">
    <property type="entry name" value="PUA domain-like"/>
    <property type="match status" value="1"/>
</dbReference>
<dbReference type="SUPFAM" id="SSF53335">
    <property type="entry name" value="S-adenosyl-L-methionine-dependent methyltransferases"/>
    <property type="match status" value="1"/>
</dbReference>
<dbReference type="PROSITE" id="PS50890">
    <property type="entry name" value="PUA"/>
    <property type="match status" value="1"/>
</dbReference>
<comment type="function">
    <text evidence="1">Specifically methylates the cytosine at position 1962 (m5C1962) of 23S rRNA.</text>
</comment>
<comment type="catalytic activity">
    <reaction evidence="1">
        <text>cytidine(1962) in 23S rRNA + S-adenosyl-L-methionine = 5-methylcytidine(1962) in 23S rRNA + S-adenosyl-L-homocysteine + H(+)</text>
        <dbReference type="Rhea" id="RHEA:42912"/>
        <dbReference type="Rhea" id="RHEA-COMP:10382"/>
        <dbReference type="Rhea" id="RHEA-COMP:10386"/>
        <dbReference type="ChEBI" id="CHEBI:15378"/>
        <dbReference type="ChEBI" id="CHEBI:57856"/>
        <dbReference type="ChEBI" id="CHEBI:59789"/>
        <dbReference type="ChEBI" id="CHEBI:74483"/>
        <dbReference type="ChEBI" id="CHEBI:82748"/>
        <dbReference type="EC" id="2.1.1.191"/>
    </reaction>
</comment>
<comment type="subcellular location">
    <subcellularLocation>
        <location evidence="1">Cytoplasm</location>
    </subcellularLocation>
</comment>
<comment type="similarity">
    <text evidence="1">Belongs to the methyltransferase superfamily. RlmI family.</text>
</comment>
<reference key="1">
    <citation type="journal article" date="2008" name="BMC Genomics">
        <title>The genome of Aeromonas salmonicida subsp. salmonicida A449: insights into the evolution of a fish pathogen.</title>
        <authorList>
            <person name="Reith M.E."/>
            <person name="Singh R.K."/>
            <person name="Curtis B."/>
            <person name="Boyd J.M."/>
            <person name="Bouevitch A."/>
            <person name="Kimball J."/>
            <person name="Munholland J."/>
            <person name="Murphy C."/>
            <person name="Sarty D."/>
            <person name="Williams J."/>
            <person name="Nash J.H."/>
            <person name="Johnson S.C."/>
            <person name="Brown L.L."/>
        </authorList>
    </citation>
    <scope>NUCLEOTIDE SEQUENCE [LARGE SCALE GENOMIC DNA]</scope>
    <source>
        <strain>A449</strain>
    </source>
</reference>
<gene>
    <name evidence="1" type="primary">rlmI</name>
    <name type="ordered locus">ASA_2074</name>
</gene>
<protein>
    <recommendedName>
        <fullName evidence="1">Ribosomal RNA large subunit methyltransferase I</fullName>
        <ecNumber evidence="1">2.1.1.191</ecNumber>
    </recommendedName>
    <alternativeName>
        <fullName evidence="1">23S rRNA m5C1962 methyltransferase</fullName>
    </alternativeName>
    <alternativeName>
        <fullName evidence="1">rRNA (cytosine-C(5)-)-methyltransferase RlmI</fullName>
    </alternativeName>
</protein>
<name>RLMI_AERS4</name>